<gene>
    <name evidence="1" type="primary">truB</name>
    <name type="ordered locus">VSAL_I0600</name>
</gene>
<protein>
    <recommendedName>
        <fullName evidence="1">tRNA pseudouridine synthase B</fullName>
        <ecNumber evidence="1">5.4.99.25</ecNumber>
    </recommendedName>
    <alternativeName>
        <fullName evidence="1">tRNA pseudouridine(55) synthase</fullName>
        <shortName evidence="1">Psi55 synthase</shortName>
    </alternativeName>
    <alternativeName>
        <fullName evidence="1">tRNA pseudouridylate synthase</fullName>
    </alternativeName>
    <alternativeName>
        <fullName evidence="1">tRNA-uridine isomerase</fullName>
    </alternativeName>
</protein>
<name>TRUB_ALISL</name>
<keyword id="KW-0413">Isomerase</keyword>
<keyword id="KW-0819">tRNA processing</keyword>
<comment type="function">
    <text evidence="1">Responsible for synthesis of pseudouridine from uracil-55 in the psi GC loop of transfer RNAs.</text>
</comment>
<comment type="catalytic activity">
    <reaction evidence="1">
        <text>uridine(55) in tRNA = pseudouridine(55) in tRNA</text>
        <dbReference type="Rhea" id="RHEA:42532"/>
        <dbReference type="Rhea" id="RHEA-COMP:10101"/>
        <dbReference type="Rhea" id="RHEA-COMP:10102"/>
        <dbReference type="ChEBI" id="CHEBI:65314"/>
        <dbReference type="ChEBI" id="CHEBI:65315"/>
        <dbReference type="EC" id="5.4.99.25"/>
    </reaction>
</comment>
<comment type="similarity">
    <text evidence="1">Belongs to the pseudouridine synthase TruB family. Type 1 subfamily.</text>
</comment>
<organism>
    <name type="scientific">Aliivibrio salmonicida (strain LFI1238)</name>
    <name type="common">Vibrio salmonicida (strain LFI1238)</name>
    <dbReference type="NCBI Taxonomy" id="316275"/>
    <lineage>
        <taxon>Bacteria</taxon>
        <taxon>Pseudomonadati</taxon>
        <taxon>Pseudomonadota</taxon>
        <taxon>Gammaproteobacteria</taxon>
        <taxon>Vibrionales</taxon>
        <taxon>Vibrionaceae</taxon>
        <taxon>Aliivibrio</taxon>
    </lineage>
</organism>
<feature type="chain" id="PRO_1000149816" description="tRNA pseudouridine synthase B">
    <location>
        <begin position="1"/>
        <end position="318"/>
    </location>
</feature>
<feature type="active site" description="Nucleophile" evidence="1">
    <location>
        <position position="47"/>
    </location>
</feature>
<accession>B6ENE4</accession>
<proteinExistence type="inferred from homology"/>
<reference key="1">
    <citation type="journal article" date="2008" name="BMC Genomics">
        <title>The genome sequence of the fish pathogen Aliivibrio salmonicida strain LFI1238 shows extensive evidence of gene decay.</title>
        <authorList>
            <person name="Hjerde E."/>
            <person name="Lorentzen M.S."/>
            <person name="Holden M.T."/>
            <person name="Seeger K."/>
            <person name="Paulsen S."/>
            <person name="Bason N."/>
            <person name="Churcher C."/>
            <person name="Harris D."/>
            <person name="Norbertczak H."/>
            <person name="Quail M.A."/>
            <person name="Sanders S."/>
            <person name="Thurston S."/>
            <person name="Parkhill J."/>
            <person name="Willassen N.P."/>
            <person name="Thomson N.R."/>
        </authorList>
    </citation>
    <scope>NUCLEOTIDE SEQUENCE [LARGE SCALE GENOMIC DNA]</scope>
    <source>
        <strain>LFI1238</strain>
    </source>
</reference>
<evidence type="ECO:0000255" key="1">
    <source>
        <dbReference type="HAMAP-Rule" id="MF_01080"/>
    </source>
</evidence>
<sequence length="318" mass="35864">MARRRKGRPIDGVILIDKPAGITSNDTLQKVKRIYFAEKAGHTGALDPLATGMLPLCFGEATKFSQFLLDSDKRYRVVAKLGERTNTSDSDGEVVETREVKVDRGQLERCIAKFRGTTDQIPSMFSALKHEGRPLYEYAREGIEVPRKSRKITVYSIELIRFEGHEVEMEVHCSKGTYIRTITDDLGEMLGCGAHVTYLRRTGVSNYPYENMVTIEHLEALLEKAHREEISPRELLDPLLMPMDSAVQDLPEVNMITELADHVLHGQPVQVFGAPQDGIVRMTSGEERLFIGIGHIDDDGRVAPKRLVVFRDEIEEDK</sequence>
<dbReference type="EC" id="5.4.99.25" evidence="1"/>
<dbReference type="EMBL" id="FM178379">
    <property type="protein sequence ID" value="CAQ78285.1"/>
    <property type="molecule type" value="Genomic_DNA"/>
</dbReference>
<dbReference type="RefSeq" id="WP_012549408.1">
    <property type="nucleotide sequence ID" value="NC_011312.1"/>
</dbReference>
<dbReference type="SMR" id="B6ENE4"/>
<dbReference type="KEGG" id="vsa:VSAL_I0600"/>
<dbReference type="eggNOG" id="COG0130">
    <property type="taxonomic scope" value="Bacteria"/>
</dbReference>
<dbReference type="HOGENOM" id="CLU_032087_0_3_6"/>
<dbReference type="Proteomes" id="UP000001730">
    <property type="component" value="Chromosome 1"/>
</dbReference>
<dbReference type="GO" id="GO:0003723">
    <property type="term" value="F:RNA binding"/>
    <property type="evidence" value="ECO:0007669"/>
    <property type="project" value="InterPro"/>
</dbReference>
<dbReference type="GO" id="GO:0160148">
    <property type="term" value="F:tRNA pseudouridine(55) synthase activity"/>
    <property type="evidence" value="ECO:0007669"/>
    <property type="project" value="UniProtKB-EC"/>
</dbReference>
<dbReference type="GO" id="GO:1990481">
    <property type="term" value="P:mRNA pseudouridine synthesis"/>
    <property type="evidence" value="ECO:0007669"/>
    <property type="project" value="TreeGrafter"/>
</dbReference>
<dbReference type="GO" id="GO:0031119">
    <property type="term" value="P:tRNA pseudouridine synthesis"/>
    <property type="evidence" value="ECO:0007669"/>
    <property type="project" value="UniProtKB-UniRule"/>
</dbReference>
<dbReference type="CDD" id="cd02573">
    <property type="entry name" value="PseudoU_synth_EcTruB"/>
    <property type="match status" value="1"/>
</dbReference>
<dbReference type="CDD" id="cd21152">
    <property type="entry name" value="PUA_TruB_bacterial"/>
    <property type="match status" value="1"/>
</dbReference>
<dbReference type="FunFam" id="2.30.130.10:FF:000004">
    <property type="entry name" value="tRNA pseudouridine synthase B"/>
    <property type="match status" value="1"/>
</dbReference>
<dbReference type="FunFam" id="3.30.2350.10:FF:000003">
    <property type="entry name" value="tRNA pseudouridine synthase B"/>
    <property type="match status" value="1"/>
</dbReference>
<dbReference type="Gene3D" id="3.30.2350.10">
    <property type="entry name" value="Pseudouridine synthase"/>
    <property type="match status" value="1"/>
</dbReference>
<dbReference type="Gene3D" id="2.30.130.10">
    <property type="entry name" value="PUA domain"/>
    <property type="match status" value="1"/>
</dbReference>
<dbReference type="HAMAP" id="MF_01080">
    <property type="entry name" value="TruB_bact"/>
    <property type="match status" value="1"/>
</dbReference>
<dbReference type="InterPro" id="IPR020103">
    <property type="entry name" value="PsdUridine_synth_cat_dom_sf"/>
</dbReference>
<dbReference type="InterPro" id="IPR002501">
    <property type="entry name" value="PsdUridine_synth_N"/>
</dbReference>
<dbReference type="InterPro" id="IPR015947">
    <property type="entry name" value="PUA-like_sf"/>
</dbReference>
<dbReference type="InterPro" id="IPR036974">
    <property type="entry name" value="PUA_sf"/>
</dbReference>
<dbReference type="InterPro" id="IPR014780">
    <property type="entry name" value="tRNA_psdUridine_synth_TruB"/>
</dbReference>
<dbReference type="InterPro" id="IPR015240">
    <property type="entry name" value="tRNA_sdUridine_synth_fam1_C"/>
</dbReference>
<dbReference type="InterPro" id="IPR032819">
    <property type="entry name" value="TruB_C"/>
</dbReference>
<dbReference type="NCBIfam" id="TIGR00431">
    <property type="entry name" value="TruB"/>
    <property type="match status" value="1"/>
</dbReference>
<dbReference type="PANTHER" id="PTHR13767:SF2">
    <property type="entry name" value="PSEUDOURIDYLATE SYNTHASE TRUB1"/>
    <property type="match status" value="1"/>
</dbReference>
<dbReference type="PANTHER" id="PTHR13767">
    <property type="entry name" value="TRNA-PSEUDOURIDINE SYNTHASE"/>
    <property type="match status" value="1"/>
</dbReference>
<dbReference type="Pfam" id="PF09157">
    <property type="entry name" value="TruB-C_2"/>
    <property type="match status" value="1"/>
</dbReference>
<dbReference type="Pfam" id="PF16198">
    <property type="entry name" value="TruB_C_2"/>
    <property type="match status" value="1"/>
</dbReference>
<dbReference type="Pfam" id="PF01509">
    <property type="entry name" value="TruB_N"/>
    <property type="match status" value="1"/>
</dbReference>
<dbReference type="SUPFAM" id="SSF55120">
    <property type="entry name" value="Pseudouridine synthase"/>
    <property type="match status" value="1"/>
</dbReference>
<dbReference type="SUPFAM" id="SSF88697">
    <property type="entry name" value="PUA domain-like"/>
    <property type="match status" value="1"/>
</dbReference>